<reference key="1">
    <citation type="journal article" date="2008" name="PLoS Genet.">
        <title>Complete genome sequence of the N2-fixing broad host range endophyte Klebsiella pneumoniae 342 and virulence predictions verified in mice.</title>
        <authorList>
            <person name="Fouts D.E."/>
            <person name="Tyler H.L."/>
            <person name="DeBoy R.T."/>
            <person name="Daugherty S."/>
            <person name="Ren Q."/>
            <person name="Badger J.H."/>
            <person name="Durkin A.S."/>
            <person name="Huot H."/>
            <person name="Shrivastava S."/>
            <person name="Kothari S."/>
            <person name="Dodson R.J."/>
            <person name="Mohamoud Y."/>
            <person name="Khouri H."/>
            <person name="Roesch L.F.W."/>
            <person name="Krogfelt K.A."/>
            <person name="Struve C."/>
            <person name="Triplett E.W."/>
            <person name="Methe B.A."/>
        </authorList>
    </citation>
    <scope>NUCLEOTIDE SEQUENCE [LARGE SCALE GENOMIC DNA]</scope>
    <source>
        <strain>342</strain>
    </source>
</reference>
<dbReference type="EMBL" id="CP000964">
    <property type="protein sequence ID" value="ACI11112.1"/>
    <property type="molecule type" value="Genomic_DNA"/>
</dbReference>
<dbReference type="SMR" id="B5XW51"/>
<dbReference type="KEGG" id="kpe:KPK_2069"/>
<dbReference type="HOGENOM" id="CLU_036856_0_1_6"/>
<dbReference type="Proteomes" id="UP000001734">
    <property type="component" value="Chromosome"/>
</dbReference>
<dbReference type="GO" id="GO:0005737">
    <property type="term" value="C:cytoplasm"/>
    <property type="evidence" value="ECO:0007669"/>
    <property type="project" value="UniProtKB-SubCell"/>
</dbReference>
<dbReference type="GO" id="GO:0016149">
    <property type="term" value="F:translation release factor activity, codon specific"/>
    <property type="evidence" value="ECO:0007669"/>
    <property type="project" value="UniProtKB-UniRule"/>
</dbReference>
<dbReference type="FunFam" id="3.30.160.20:FF:000004">
    <property type="entry name" value="Peptide chain release factor 1"/>
    <property type="match status" value="1"/>
</dbReference>
<dbReference type="FunFam" id="3.30.70.1660:FF:000002">
    <property type="entry name" value="Peptide chain release factor 1"/>
    <property type="match status" value="1"/>
</dbReference>
<dbReference type="FunFam" id="3.30.70.1660:FF:000004">
    <property type="entry name" value="Peptide chain release factor 1"/>
    <property type="match status" value="1"/>
</dbReference>
<dbReference type="Gene3D" id="3.30.160.20">
    <property type="match status" value="1"/>
</dbReference>
<dbReference type="Gene3D" id="3.30.70.1660">
    <property type="match status" value="2"/>
</dbReference>
<dbReference type="Gene3D" id="6.10.140.1950">
    <property type="match status" value="1"/>
</dbReference>
<dbReference type="HAMAP" id="MF_00093">
    <property type="entry name" value="Rel_fac_1"/>
    <property type="match status" value="1"/>
</dbReference>
<dbReference type="InterPro" id="IPR005139">
    <property type="entry name" value="PCRF"/>
</dbReference>
<dbReference type="InterPro" id="IPR000352">
    <property type="entry name" value="Pep_chain_release_fac_I"/>
</dbReference>
<dbReference type="InterPro" id="IPR045853">
    <property type="entry name" value="Pep_chain_release_fac_I_sf"/>
</dbReference>
<dbReference type="InterPro" id="IPR050057">
    <property type="entry name" value="Prokaryotic/Mito_RF"/>
</dbReference>
<dbReference type="InterPro" id="IPR004373">
    <property type="entry name" value="RF-1"/>
</dbReference>
<dbReference type="NCBIfam" id="TIGR00019">
    <property type="entry name" value="prfA"/>
    <property type="match status" value="1"/>
</dbReference>
<dbReference type="NCBIfam" id="NF001859">
    <property type="entry name" value="PRK00591.1"/>
    <property type="match status" value="1"/>
</dbReference>
<dbReference type="PANTHER" id="PTHR43804">
    <property type="entry name" value="LD18447P"/>
    <property type="match status" value="1"/>
</dbReference>
<dbReference type="PANTHER" id="PTHR43804:SF7">
    <property type="entry name" value="LD18447P"/>
    <property type="match status" value="1"/>
</dbReference>
<dbReference type="Pfam" id="PF03462">
    <property type="entry name" value="PCRF"/>
    <property type="match status" value="1"/>
</dbReference>
<dbReference type="Pfam" id="PF00472">
    <property type="entry name" value="RF-1"/>
    <property type="match status" value="1"/>
</dbReference>
<dbReference type="SMART" id="SM00937">
    <property type="entry name" value="PCRF"/>
    <property type="match status" value="1"/>
</dbReference>
<dbReference type="SUPFAM" id="SSF75620">
    <property type="entry name" value="Release factor"/>
    <property type="match status" value="1"/>
</dbReference>
<dbReference type="PROSITE" id="PS00745">
    <property type="entry name" value="RF_PROK_I"/>
    <property type="match status" value="1"/>
</dbReference>
<name>RF1_KLEP3</name>
<keyword id="KW-0963">Cytoplasm</keyword>
<keyword id="KW-0488">Methylation</keyword>
<keyword id="KW-0648">Protein biosynthesis</keyword>
<organism>
    <name type="scientific">Klebsiella pneumoniae (strain 342)</name>
    <dbReference type="NCBI Taxonomy" id="507522"/>
    <lineage>
        <taxon>Bacteria</taxon>
        <taxon>Pseudomonadati</taxon>
        <taxon>Pseudomonadota</taxon>
        <taxon>Gammaproteobacteria</taxon>
        <taxon>Enterobacterales</taxon>
        <taxon>Enterobacteriaceae</taxon>
        <taxon>Klebsiella/Raoultella group</taxon>
        <taxon>Klebsiella</taxon>
        <taxon>Klebsiella pneumoniae complex</taxon>
    </lineage>
</organism>
<sequence length="360" mass="40438">MKSSIVAKLEALYERHEEVQALLGDAATIADQDKFRALSREYAQLSDVARCYTDWRQVQEDIETAQMMLDDPEMREMAQEELRDAKEKGDQLEQQLQVLLLPKDPDDERNAFVEVRAGTGGDEAALFAGDLFRMYSRYAESRRWQVEILSANEGEHGGFKEVIAKFSGDGVYGRLKFESGGHRVQRVPATESQGRIHTSACTVAVMPELPEAEMPDINPADLRIDTFRSSGAGGQHVNTTDSAIRITHLPTGIVVECQDERSQHKNKAKALSVLGARIRAAEVAKRQQAEASTRRNLLGSGDRSDRNRTYNFPQGRVTDHRINLTLYRLDETMEGKLDMLIEPIVQEYQADQLAALSEQE</sequence>
<gene>
    <name evidence="1" type="primary">prfA</name>
    <name type="ordered locus">KPK_2069</name>
</gene>
<proteinExistence type="inferred from homology"/>
<accession>B5XW51</accession>
<protein>
    <recommendedName>
        <fullName evidence="1">Peptide chain release factor 1</fullName>
        <shortName evidence="1">RF-1</shortName>
    </recommendedName>
</protein>
<feature type="chain" id="PRO_1000093465" description="Peptide chain release factor 1">
    <location>
        <begin position="1"/>
        <end position="360"/>
    </location>
</feature>
<feature type="region of interest" description="Disordered" evidence="2">
    <location>
        <begin position="285"/>
        <end position="313"/>
    </location>
</feature>
<feature type="modified residue" description="N5-methylglutamine" evidence="1">
    <location>
        <position position="235"/>
    </location>
</feature>
<comment type="function">
    <text evidence="1">Peptide chain release factor 1 directs the termination of translation in response to the peptide chain termination codons UAG and UAA.</text>
</comment>
<comment type="subcellular location">
    <subcellularLocation>
        <location evidence="1">Cytoplasm</location>
    </subcellularLocation>
</comment>
<comment type="PTM">
    <text evidence="1">Methylated by PrmC. Methylation increases the termination efficiency of RF1.</text>
</comment>
<comment type="similarity">
    <text evidence="1">Belongs to the prokaryotic/mitochondrial release factor family.</text>
</comment>
<evidence type="ECO:0000255" key="1">
    <source>
        <dbReference type="HAMAP-Rule" id="MF_00093"/>
    </source>
</evidence>
<evidence type="ECO:0000256" key="2">
    <source>
        <dbReference type="SAM" id="MobiDB-lite"/>
    </source>
</evidence>